<feature type="chain" id="PRO_0000183245" description="dTDP-glucose 4,6-dehydratase">
    <location>
        <begin position="1"/>
        <end position="351"/>
    </location>
</feature>
<feature type="active site" description="Proton donor" evidence="2">
    <location>
        <position position="134"/>
    </location>
</feature>
<feature type="active site" description="Proton acceptor" evidence="2">
    <location>
        <position position="135"/>
    </location>
</feature>
<feature type="active site" description="Proton acceptor" evidence="2">
    <location>
        <position position="158"/>
    </location>
</feature>
<feature type="binding site" evidence="2">
    <location>
        <begin position="12"/>
        <end position="13"/>
    </location>
    <ligand>
        <name>NAD(+)</name>
        <dbReference type="ChEBI" id="CHEBI:57540"/>
    </ligand>
</feature>
<feature type="binding site" evidence="2">
    <location>
        <begin position="32"/>
        <end position="35"/>
    </location>
    <ligand>
        <name>NAD(+)</name>
        <dbReference type="ChEBI" id="CHEBI:57540"/>
    </ligand>
</feature>
<feature type="binding site" evidence="2">
    <location>
        <begin position="58"/>
        <end position="59"/>
    </location>
    <ligand>
        <name>NAD(+)</name>
        <dbReference type="ChEBI" id="CHEBI:57540"/>
    </ligand>
</feature>
<feature type="binding site" evidence="2">
    <location>
        <begin position="80"/>
        <end position="84"/>
    </location>
    <ligand>
        <name>NAD(+)</name>
        <dbReference type="ChEBI" id="CHEBI:57540"/>
    </ligand>
</feature>
<feature type="binding site" evidence="1">
    <location>
        <position position="84"/>
    </location>
    <ligand>
        <name>substrate</name>
    </ligand>
</feature>
<feature type="binding site" evidence="2">
    <location>
        <position position="99"/>
    </location>
    <ligand>
        <name>NAD(+)</name>
        <dbReference type="ChEBI" id="CHEBI:57540"/>
    </ligand>
</feature>
<feature type="binding site" evidence="1">
    <location>
        <position position="133"/>
    </location>
    <ligand>
        <name>substrate</name>
    </ligand>
</feature>
<feature type="binding site" evidence="2">
    <location>
        <begin position="158"/>
        <end position="162"/>
    </location>
    <ligand>
        <name>NAD(+)</name>
        <dbReference type="ChEBI" id="CHEBI:57540"/>
    </ligand>
</feature>
<feature type="binding site" evidence="1">
    <location>
        <position position="187"/>
    </location>
    <ligand>
        <name>substrate</name>
    </ligand>
</feature>
<feature type="binding site" evidence="2">
    <location>
        <position position="188"/>
    </location>
    <ligand>
        <name>NAD(+)</name>
        <dbReference type="ChEBI" id="CHEBI:57540"/>
    </ligand>
</feature>
<feature type="binding site" evidence="1">
    <location>
        <begin position="197"/>
        <end position="198"/>
    </location>
    <ligand>
        <name>substrate</name>
    </ligand>
</feature>
<feature type="binding site" evidence="1">
    <location>
        <begin position="213"/>
        <end position="215"/>
    </location>
    <ligand>
        <name>substrate</name>
    </ligand>
</feature>
<feature type="binding site" evidence="1">
    <location>
        <position position="222"/>
    </location>
    <ligand>
        <name>substrate</name>
    </ligand>
</feature>
<feature type="binding site" evidence="1">
    <location>
        <position position="257"/>
    </location>
    <ligand>
        <name>substrate</name>
    </ligand>
</feature>
<feature type="binding site" evidence="1">
    <location>
        <begin position="289"/>
        <end position="293"/>
    </location>
    <ligand>
        <name>substrate</name>
    </ligand>
</feature>
<dbReference type="EC" id="4.2.1.46" evidence="2"/>
<dbReference type="EMBL" id="AE008922">
    <property type="protein sequence ID" value="AAM39937.1"/>
    <property type="molecule type" value="Genomic_DNA"/>
</dbReference>
<dbReference type="RefSeq" id="NP_636013.1">
    <property type="nucleotide sequence ID" value="NC_003902.1"/>
</dbReference>
<dbReference type="RefSeq" id="WP_011035864.1">
    <property type="nucleotide sequence ID" value="NC_003902.1"/>
</dbReference>
<dbReference type="SMR" id="P0C7J0"/>
<dbReference type="STRING" id="190485.XCC0621"/>
<dbReference type="EnsemblBacteria" id="AAM39937">
    <property type="protein sequence ID" value="AAM39937"/>
    <property type="gene ID" value="XCC0621"/>
</dbReference>
<dbReference type="KEGG" id="xcc:XCC0621"/>
<dbReference type="PATRIC" id="fig|190485.4.peg.681"/>
<dbReference type="eggNOG" id="COG1088">
    <property type="taxonomic scope" value="Bacteria"/>
</dbReference>
<dbReference type="HOGENOM" id="CLU_007383_1_14_6"/>
<dbReference type="OrthoDB" id="9803010at2"/>
<dbReference type="UniPathway" id="UPA00124"/>
<dbReference type="UniPathway" id="UPA00281"/>
<dbReference type="Proteomes" id="UP000001010">
    <property type="component" value="Chromosome"/>
</dbReference>
<dbReference type="GO" id="GO:0008460">
    <property type="term" value="F:dTDP-glucose 4,6-dehydratase activity"/>
    <property type="evidence" value="ECO:0000250"/>
    <property type="project" value="UniProtKB"/>
</dbReference>
<dbReference type="GO" id="GO:0019305">
    <property type="term" value="P:dTDP-rhamnose biosynthetic process"/>
    <property type="evidence" value="ECO:0007669"/>
    <property type="project" value="UniProtKB-UniPathway"/>
</dbReference>
<dbReference type="GO" id="GO:0009103">
    <property type="term" value="P:lipopolysaccharide biosynthetic process"/>
    <property type="evidence" value="ECO:0000250"/>
    <property type="project" value="UniProtKB"/>
</dbReference>
<dbReference type="GO" id="GO:0009243">
    <property type="term" value="P:O antigen biosynthetic process"/>
    <property type="evidence" value="ECO:0007669"/>
    <property type="project" value="UniProtKB-UniPathway"/>
</dbReference>
<dbReference type="GO" id="GO:0000271">
    <property type="term" value="P:polysaccharide biosynthetic process"/>
    <property type="evidence" value="ECO:0000250"/>
    <property type="project" value="UniProtKB"/>
</dbReference>
<dbReference type="CDD" id="cd05246">
    <property type="entry name" value="dTDP_GD_SDR_e"/>
    <property type="match status" value="1"/>
</dbReference>
<dbReference type="Gene3D" id="3.40.50.720">
    <property type="entry name" value="NAD(P)-binding Rossmann-like Domain"/>
    <property type="match status" value="1"/>
</dbReference>
<dbReference type="Gene3D" id="3.90.25.10">
    <property type="entry name" value="UDP-galactose 4-epimerase, domain 1"/>
    <property type="match status" value="1"/>
</dbReference>
<dbReference type="InterPro" id="IPR005888">
    <property type="entry name" value="dTDP_Gluc_deHydtase"/>
</dbReference>
<dbReference type="InterPro" id="IPR016040">
    <property type="entry name" value="NAD(P)-bd_dom"/>
</dbReference>
<dbReference type="InterPro" id="IPR036291">
    <property type="entry name" value="NAD(P)-bd_dom_sf"/>
</dbReference>
<dbReference type="NCBIfam" id="TIGR01181">
    <property type="entry name" value="dTDP_gluc_dehyt"/>
    <property type="match status" value="1"/>
</dbReference>
<dbReference type="PANTHER" id="PTHR43000">
    <property type="entry name" value="DTDP-D-GLUCOSE 4,6-DEHYDRATASE-RELATED"/>
    <property type="match status" value="1"/>
</dbReference>
<dbReference type="Pfam" id="PF16363">
    <property type="entry name" value="GDP_Man_Dehyd"/>
    <property type="match status" value="1"/>
</dbReference>
<dbReference type="SUPFAM" id="SSF51735">
    <property type="entry name" value="NAD(P)-binding Rossmann-fold domains"/>
    <property type="match status" value="1"/>
</dbReference>
<gene>
    <name type="primary">rfbB</name>
    <name type="synonym">rmlB</name>
    <name type="ordered locus">XCC0621</name>
</gene>
<evidence type="ECO:0000250" key="1">
    <source>
        <dbReference type="UniProtKB" id="P26391"/>
    </source>
</evidence>
<evidence type="ECO:0000250" key="2">
    <source>
        <dbReference type="UniProtKB" id="P27830"/>
    </source>
</evidence>
<evidence type="ECO:0000250" key="3">
    <source>
        <dbReference type="UniProtKB" id="P37759"/>
    </source>
</evidence>
<sequence length="351" mass="38672">MATWLVTGRAGFIGGNFVLEAVSRGIRVVNLDALTYAGNLNTLASLEGNADHIFVKGDIGDGALVTRLLQEHQPDAVLNFAAESHVDRSIEGPGAFIQTNVVGTLALLEAVRDYWKALPDTRRDAFRFLHVSTDEVYGTLGETGKFTETTPYAPNSPYSASKAASDHLVRAFHHTYGLPVLTTNCSNNYGPYHFPEKLIPLVIAKALAGEPLPVYGDGKQVRDWLFVSDHCEAIRTVLAKGRVGETYNVGGNSERQNIEVVQAICALLDQHRPREDGKPRESQIAYVTDRPGHDRRYAIDASKLKDELGWEPAYTFEQGIAQTVDWYLTNQTWVQGVLDGSYRLERIGATV</sequence>
<comment type="function">
    <text evidence="2">Catalyzes the dehydration of dTDP-D-glucose to form dTDP-6-deoxy-D-xylo-4-hexulose via a three-step process involving oxidation, dehydration and reduction.</text>
</comment>
<comment type="catalytic activity">
    <reaction evidence="2">
        <text>dTDP-alpha-D-glucose = dTDP-4-dehydro-6-deoxy-alpha-D-glucose + H2O</text>
        <dbReference type="Rhea" id="RHEA:17221"/>
        <dbReference type="ChEBI" id="CHEBI:15377"/>
        <dbReference type="ChEBI" id="CHEBI:57477"/>
        <dbReference type="ChEBI" id="CHEBI:57649"/>
        <dbReference type="EC" id="4.2.1.46"/>
    </reaction>
</comment>
<comment type="cofactor">
    <cofactor evidence="2">
        <name>NAD(+)</name>
        <dbReference type="ChEBI" id="CHEBI:57540"/>
    </cofactor>
    <text evidence="2">Binds 1 NAD(+) per subunit.</text>
</comment>
<comment type="pathway">
    <text evidence="3">Carbohydrate biosynthesis; dTDP-L-rhamnose biosynthesis.</text>
</comment>
<comment type="pathway">
    <text evidence="3">Bacterial outer membrane biogenesis; LPS O-antigen biosynthesis.</text>
</comment>
<comment type="subunit">
    <text evidence="2">Homodimer.</text>
</comment>
<comment type="similarity">
    <text evidence="2">Belongs to the NAD(P)-dependent epimerase/dehydratase family. dTDP-glucose dehydratase subfamily.</text>
</comment>
<accession>P0C7J0</accession>
<accession>P55295</accession>
<reference key="1">
    <citation type="journal article" date="2002" name="Nature">
        <title>Comparison of the genomes of two Xanthomonas pathogens with differing host specificities.</title>
        <authorList>
            <person name="da Silva A.C.R."/>
            <person name="Ferro J.A."/>
            <person name="Reinach F.C."/>
            <person name="Farah C.S."/>
            <person name="Furlan L.R."/>
            <person name="Quaggio R.B."/>
            <person name="Monteiro-Vitorello C.B."/>
            <person name="Van Sluys M.A."/>
            <person name="Almeida N.F. Jr."/>
            <person name="Alves L.M.C."/>
            <person name="do Amaral A.M."/>
            <person name="Bertolini M.C."/>
            <person name="Camargo L.E.A."/>
            <person name="Camarotte G."/>
            <person name="Cannavan F."/>
            <person name="Cardozo J."/>
            <person name="Chambergo F."/>
            <person name="Ciapina L.P."/>
            <person name="Cicarelli R.M.B."/>
            <person name="Coutinho L.L."/>
            <person name="Cursino-Santos J.R."/>
            <person name="El-Dorry H."/>
            <person name="Faria J.B."/>
            <person name="Ferreira A.J.S."/>
            <person name="Ferreira R.C.C."/>
            <person name="Ferro M.I.T."/>
            <person name="Formighieri E.F."/>
            <person name="Franco M.C."/>
            <person name="Greggio C.C."/>
            <person name="Gruber A."/>
            <person name="Katsuyama A.M."/>
            <person name="Kishi L.T."/>
            <person name="Leite R.P."/>
            <person name="Lemos E.G.M."/>
            <person name="Lemos M.V.F."/>
            <person name="Locali E.C."/>
            <person name="Machado M.A."/>
            <person name="Madeira A.M.B.N."/>
            <person name="Martinez-Rossi N.M."/>
            <person name="Martins E.C."/>
            <person name="Meidanis J."/>
            <person name="Menck C.F.M."/>
            <person name="Miyaki C.Y."/>
            <person name="Moon D.H."/>
            <person name="Moreira L.M."/>
            <person name="Novo M.T.M."/>
            <person name="Okura V.K."/>
            <person name="Oliveira M.C."/>
            <person name="Oliveira V.R."/>
            <person name="Pereira H.A."/>
            <person name="Rossi A."/>
            <person name="Sena J.A.D."/>
            <person name="Silva C."/>
            <person name="de Souza R.F."/>
            <person name="Spinola L.A.F."/>
            <person name="Takita M.A."/>
            <person name="Tamura R.E."/>
            <person name="Teixeira E.C."/>
            <person name="Tezza R.I.D."/>
            <person name="Trindade dos Santos M."/>
            <person name="Truffi D."/>
            <person name="Tsai S.M."/>
            <person name="White F.F."/>
            <person name="Setubal J.C."/>
            <person name="Kitajima J.P."/>
        </authorList>
    </citation>
    <scope>NUCLEOTIDE SEQUENCE [LARGE SCALE GENOMIC DNA]</scope>
    <source>
        <strain>ATCC 33913 / DSM 3586 / NCPPB 528 / LMG 568 / P 25</strain>
    </source>
</reference>
<proteinExistence type="inferred from homology"/>
<protein>
    <recommendedName>
        <fullName evidence="2">dTDP-glucose 4,6-dehydratase</fullName>
        <ecNumber evidence="2">4.2.1.46</ecNumber>
    </recommendedName>
</protein>
<organism>
    <name type="scientific">Xanthomonas campestris pv. campestris (strain ATCC 33913 / DSM 3586 / NCPPB 528 / LMG 568 / P 25)</name>
    <dbReference type="NCBI Taxonomy" id="190485"/>
    <lineage>
        <taxon>Bacteria</taxon>
        <taxon>Pseudomonadati</taxon>
        <taxon>Pseudomonadota</taxon>
        <taxon>Gammaproteobacteria</taxon>
        <taxon>Lysobacterales</taxon>
        <taxon>Lysobacteraceae</taxon>
        <taxon>Xanthomonas</taxon>
    </lineage>
</organism>
<keyword id="KW-0448">Lipopolysaccharide biosynthesis</keyword>
<keyword id="KW-0456">Lyase</keyword>
<keyword id="KW-0520">NAD</keyword>
<keyword id="KW-1185">Reference proteome</keyword>
<name>RMLB_XANCP</name>